<keyword id="KW-1185">Reference proteome</keyword>
<keyword id="KW-0687">Ribonucleoprotein</keyword>
<keyword id="KW-0689">Ribosomal protein</keyword>
<keyword id="KW-0694">RNA-binding</keyword>
<keyword id="KW-0699">rRNA-binding</keyword>
<sequence>MSNEINLQEFKMHEKDSGSSSYQIARLTQRIAHLTEHLSTNKHDVSSRRGLLKMVALRRKLLDYVKREDMAQYQSLIQRLGLRR</sequence>
<comment type="function">
    <text evidence="1">One of the primary rRNA binding proteins, it binds directly to 16S rRNA where it helps nucleate assembly of the platform of the 30S subunit by binding and bridging several RNA helices of the 16S rRNA.</text>
</comment>
<comment type="function">
    <text evidence="1">Forms an intersubunit bridge (bridge B4) with the 23S rRNA of the 50S subunit in the ribosome.</text>
</comment>
<comment type="subunit">
    <text evidence="1">Part of the 30S ribosomal subunit. Forms a bridge to the 50S subunit in the 70S ribosome, contacting the 23S rRNA.</text>
</comment>
<comment type="similarity">
    <text evidence="1">Belongs to the universal ribosomal protein uS15 family.</text>
</comment>
<evidence type="ECO:0000255" key="1">
    <source>
        <dbReference type="HAMAP-Rule" id="MF_01343"/>
    </source>
</evidence>
<evidence type="ECO:0000305" key="2"/>
<accession>B2UNB0</accession>
<dbReference type="EMBL" id="CP001071">
    <property type="protein sequence ID" value="ACD04222.1"/>
    <property type="molecule type" value="Genomic_DNA"/>
</dbReference>
<dbReference type="RefSeq" id="WP_012419437.1">
    <property type="nucleotide sequence ID" value="NC_010655.1"/>
</dbReference>
<dbReference type="SMR" id="B2UNB0"/>
<dbReference type="STRING" id="349741.Amuc_0383"/>
<dbReference type="PaxDb" id="349741-Amuc_0383"/>
<dbReference type="KEGG" id="amu:Amuc_0383"/>
<dbReference type="eggNOG" id="COG0184">
    <property type="taxonomic scope" value="Bacteria"/>
</dbReference>
<dbReference type="HOGENOM" id="CLU_148518_1_0_0"/>
<dbReference type="OrthoDB" id="9799262at2"/>
<dbReference type="BioCyc" id="AMUC349741:G1GBX-427-MONOMER"/>
<dbReference type="Proteomes" id="UP000001031">
    <property type="component" value="Chromosome"/>
</dbReference>
<dbReference type="GO" id="GO:0022627">
    <property type="term" value="C:cytosolic small ribosomal subunit"/>
    <property type="evidence" value="ECO:0007669"/>
    <property type="project" value="TreeGrafter"/>
</dbReference>
<dbReference type="GO" id="GO:0019843">
    <property type="term" value="F:rRNA binding"/>
    <property type="evidence" value="ECO:0007669"/>
    <property type="project" value="UniProtKB-UniRule"/>
</dbReference>
<dbReference type="GO" id="GO:0003735">
    <property type="term" value="F:structural constituent of ribosome"/>
    <property type="evidence" value="ECO:0007669"/>
    <property type="project" value="InterPro"/>
</dbReference>
<dbReference type="GO" id="GO:0006412">
    <property type="term" value="P:translation"/>
    <property type="evidence" value="ECO:0007669"/>
    <property type="project" value="UniProtKB-UniRule"/>
</dbReference>
<dbReference type="CDD" id="cd00677">
    <property type="entry name" value="S15_NS1_EPRS_RNA-bind"/>
    <property type="match status" value="1"/>
</dbReference>
<dbReference type="Gene3D" id="6.10.250.3130">
    <property type="match status" value="1"/>
</dbReference>
<dbReference type="Gene3D" id="1.10.287.10">
    <property type="entry name" value="S15/NS1, RNA-binding"/>
    <property type="match status" value="1"/>
</dbReference>
<dbReference type="HAMAP" id="MF_01343_B">
    <property type="entry name" value="Ribosomal_uS15_B"/>
    <property type="match status" value="1"/>
</dbReference>
<dbReference type="InterPro" id="IPR000589">
    <property type="entry name" value="Ribosomal_uS15"/>
</dbReference>
<dbReference type="InterPro" id="IPR005290">
    <property type="entry name" value="Ribosomal_uS15_bac-type"/>
</dbReference>
<dbReference type="InterPro" id="IPR009068">
    <property type="entry name" value="uS15_NS1_RNA-bd_sf"/>
</dbReference>
<dbReference type="NCBIfam" id="TIGR00952">
    <property type="entry name" value="S15_bact"/>
    <property type="match status" value="1"/>
</dbReference>
<dbReference type="PANTHER" id="PTHR23321">
    <property type="entry name" value="RIBOSOMAL PROTEIN S15, BACTERIAL AND ORGANELLAR"/>
    <property type="match status" value="1"/>
</dbReference>
<dbReference type="PANTHER" id="PTHR23321:SF26">
    <property type="entry name" value="SMALL RIBOSOMAL SUBUNIT PROTEIN US15M"/>
    <property type="match status" value="1"/>
</dbReference>
<dbReference type="Pfam" id="PF00312">
    <property type="entry name" value="Ribosomal_S15"/>
    <property type="match status" value="1"/>
</dbReference>
<dbReference type="SMART" id="SM01387">
    <property type="entry name" value="Ribosomal_S15"/>
    <property type="match status" value="1"/>
</dbReference>
<dbReference type="SUPFAM" id="SSF47060">
    <property type="entry name" value="S15/NS1 RNA-binding domain"/>
    <property type="match status" value="1"/>
</dbReference>
<dbReference type="PROSITE" id="PS00362">
    <property type="entry name" value="RIBOSOMAL_S15"/>
    <property type="match status" value="1"/>
</dbReference>
<feature type="chain" id="PRO_0000354177" description="Small ribosomal subunit protein uS15">
    <location>
        <begin position="1"/>
        <end position="84"/>
    </location>
</feature>
<reference key="1">
    <citation type="journal article" date="2011" name="PLoS ONE">
        <title>The genome of Akkermansia muciniphila, a dedicated intestinal mucin degrader, and its use in exploring intestinal metagenomes.</title>
        <authorList>
            <person name="van Passel M.W."/>
            <person name="Kant R."/>
            <person name="Zoetendal E.G."/>
            <person name="Plugge C.M."/>
            <person name="Derrien M."/>
            <person name="Malfatti S.A."/>
            <person name="Chain P.S."/>
            <person name="Woyke T."/>
            <person name="Palva A."/>
            <person name="de Vos W.M."/>
            <person name="Smidt H."/>
        </authorList>
    </citation>
    <scope>NUCLEOTIDE SEQUENCE [LARGE SCALE GENOMIC DNA]</scope>
    <source>
        <strain>ATCC BAA-835 / DSM 22959 / JCM 33894 / BCRC 81048 / CCUG 64013 / CIP 107961 / Muc</strain>
    </source>
</reference>
<protein>
    <recommendedName>
        <fullName evidence="1">Small ribosomal subunit protein uS15</fullName>
    </recommendedName>
    <alternativeName>
        <fullName evidence="2">30S ribosomal protein S15</fullName>
    </alternativeName>
</protein>
<gene>
    <name evidence="1" type="primary">rpsO</name>
    <name type="ordered locus">Amuc_0383</name>
</gene>
<proteinExistence type="inferred from homology"/>
<name>RS15_AKKM8</name>
<organism>
    <name type="scientific">Akkermansia muciniphila (strain ATCC BAA-835 / DSM 22959 / JCM 33894 / BCRC 81048 / CCUG 64013 / CIP 107961 / Muc)</name>
    <dbReference type="NCBI Taxonomy" id="349741"/>
    <lineage>
        <taxon>Bacteria</taxon>
        <taxon>Pseudomonadati</taxon>
        <taxon>Verrucomicrobiota</taxon>
        <taxon>Verrucomicrobiia</taxon>
        <taxon>Verrucomicrobiales</taxon>
        <taxon>Akkermansiaceae</taxon>
        <taxon>Akkermansia</taxon>
    </lineage>
</organism>